<keyword id="KW-0150">Chloroplast</keyword>
<keyword id="KW-0472">Membrane</keyword>
<keyword id="KW-0597">Phosphoprotein</keyword>
<keyword id="KW-0602">Photosynthesis</keyword>
<keyword id="KW-0604">Photosystem II</keyword>
<keyword id="KW-0934">Plastid</keyword>
<keyword id="KW-1185">Reference proteome</keyword>
<keyword id="KW-0793">Thylakoid</keyword>
<keyword id="KW-0812">Transmembrane</keyword>
<keyword id="KW-1133">Transmembrane helix</keyword>
<accession>Q6YXN1</accession>
<accession>A9RTF8</accession>
<evidence type="ECO:0000250" key="1">
    <source>
        <dbReference type="UniProtKB" id="P56780"/>
    </source>
</evidence>
<evidence type="ECO:0000255" key="2">
    <source>
        <dbReference type="HAMAP-Rule" id="MF_00752"/>
    </source>
</evidence>
<organism>
    <name type="scientific">Physcomitrium patens</name>
    <name type="common">Spreading-leaved earth moss</name>
    <name type="synonym">Physcomitrella patens</name>
    <dbReference type="NCBI Taxonomy" id="3218"/>
    <lineage>
        <taxon>Eukaryota</taxon>
        <taxon>Viridiplantae</taxon>
        <taxon>Streptophyta</taxon>
        <taxon>Embryophyta</taxon>
        <taxon>Bryophyta</taxon>
        <taxon>Bryophytina</taxon>
        <taxon>Bryopsida</taxon>
        <taxon>Funariidae</taxon>
        <taxon>Funariales</taxon>
        <taxon>Funariaceae</taxon>
        <taxon>Physcomitrium</taxon>
    </lineage>
</organism>
<sequence length="74" mass="7892">MATQIIDDTPKTKGKRSGLGDILKPLNSEYGKVAPGWGTTPLMGVAMGLFAVFLVIILELYNSSVLLDGVPVSW</sequence>
<dbReference type="EMBL" id="AP005672">
    <property type="protein sequence ID" value="BAC85021.1"/>
    <property type="molecule type" value="Genomic_DNA"/>
</dbReference>
<dbReference type="EMBL" id="DS544916">
    <property type="protein sequence ID" value="EDQ77795.1"/>
    <property type="molecule type" value="Genomic_DNA"/>
</dbReference>
<dbReference type="RefSeq" id="NP_904172.1">
    <property type="nucleotide sequence ID" value="NC_005087.2"/>
</dbReference>
<dbReference type="RefSeq" id="XP_001757310.1">
    <property type="nucleotide sequence ID" value="XM_001757258.1"/>
</dbReference>
<dbReference type="RefSeq" id="YP_009477503.1">
    <property type="nucleotide sequence ID" value="NC_037465.1"/>
</dbReference>
<dbReference type="SMR" id="Q6YXN1"/>
<dbReference type="FunCoup" id="Q6YXN1">
    <property type="interactions" value="570"/>
</dbReference>
<dbReference type="STRING" id="3218.Q6YXN1"/>
<dbReference type="PaxDb" id="3218-PP1S27_266V6.1"/>
<dbReference type="EnsemblPlants" id="Pp3c21_5650V3.3">
    <property type="protein sequence ID" value="PAC:32916113.CDS.1"/>
    <property type="gene ID" value="Pp3c21_5650"/>
</dbReference>
<dbReference type="GeneID" id="2546702"/>
<dbReference type="GeneID" id="36487116"/>
<dbReference type="Gramene" id="Pp3c21_5650V3.3">
    <property type="protein sequence ID" value="PAC:32916113.CDS.1"/>
    <property type="gene ID" value="Pp3c21_5650"/>
</dbReference>
<dbReference type="KEGG" id="ppp:2546702"/>
<dbReference type="eggNOG" id="ENOG502S8Y7">
    <property type="taxonomic scope" value="Eukaryota"/>
</dbReference>
<dbReference type="HOGENOM" id="CLU_190203_1_0_1"/>
<dbReference type="InParanoid" id="Q6YXN1"/>
<dbReference type="OMA" id="RTWLGDI"/>
<dbReference type="OrthoDB" id="564838at2759"/>
<dbReference type="Proteomes" id="UP000006727">
    <property type="component" value="Chloroplast"/>
</dbReference>
<dbReference type="GO" id="GO:0009535">
    <property type="term" value="C:chloroplast thylakoid membrane"/>
    <property type="evidence" value="ECO:0007669"/>
    <property type="project" value="UniProtKB-SubCell"/>
</dbReference>
<dbReference type="GO" id="GO:0009523">
    <property type="term" value="C:photosystem II"/>
    <property type="evidence" value="ECO:0007669"/>
    <property type="project" value="UniProtKB-KW"/>
</dbReference>
<dbReference type="GO" id="GO:0042301">
    <property type="term" value="F:phosphate ion binding"/>
    <property type="evidence" value="ECO:0007669"/>
    <property type="project" value="InterPro"/>
</dbReference>
<dbReference type="GO" id="GO:0015979">
    <property type="term" value="P:photosynthesis"/>
    <property type="evidence" value="ECO:0007669"/>
    <property type="project" value="UniProtKB-UniRule"/>
</dbReference>
<dbReference type="GO" id="GO:0050821">
    <property type="term" value="P:protein stabilization"/>
    <property type="evidence" value="ECO:0007669"/>
    <property type="project" value="InterPro"/>
</dbReference>
<dbReference type="Gene3D" id="1.20.5.880">
    <property type="entry name" value="Photosystem II reaction center protein H"/>
    <property type="match status" value="1"/>
</dbReference>
<dbReference type="HAMAP" id="MF_00752">
    <property type="entry name" value="PSII_PsbH"/>
    <property type="match status" value="1"/>
</dbReference>
<dbReference type="InterPro" id="IPR001056">
    <property type="entry name" value="PSII_PsbH"/>
</dbReference>
<dbReference type="InterPro" id="IPR036863">
    <property type="entry name" value="PSII_PsbH_sf"/>
</dbReference>
<dbReference type="NCBIfam" id="NF002728">
    <property type="entry name" value="PRK02624.1"/>
    <property type="match status" value="1"/>
</dbReference>
<dbReference type="PANTHER" id="PTHR34469">
    <property type="entry name" value="PHOTOSYSTEM II REACTION CENTER PROTEIN H"/>
    <property type="match status" value="1"/>
</dbReference>
<dbReference type="PANTHER" id="PTHR34469:SF4">
    <property type="entry name" value="PHOTOSYSTEM II REACTION CENTER PROTEIN H"/>
    <property type="match status" value="1"/>
</dbReference>
<dbReference type="Pfam" id="PF00737">
    <property type="entry name" value="PsbH"/>
    <property type="match status" value="1"/>
</dbReference>
<dbReference type="SUPFAM" id="SSF161025">
    <property type="entry name" value="Photosystem II 10 kDa phosphoprotein PsbH"/>
    <property type="match status" value="1"/>
</dbReference>
<name>PSBH_PHYPA</name>
<proteinExistence type="inferred from homology"/>
<reference key="1">
    <citation type="journal article" date="2003" name="Nucleic Acids Res.">
        <title>Complete chloroplast DNA sequence of the moss Physcomitrella patens: evidence for the loss and relocation of rpoA from the chloroplast to the nucleus.</title>
        <authorList>
            <person name="Sugiura C."/>
            <person name="Kobayashi Y."/>
            <person name="Setsuyuki A."/>
            <person name="Sugita C."/>
            <person name="Sugita M."/>
        </authorList>
    </citation>
    <scope>NUCLEOTIDE SEQUENCE [LARGE SCALE GENOMIC DNA]</scope>
    <source>
        <strain>cv. Gransden 2004</strain>
    </source>
</reference>
<reference key="2">
    <citation type="journal article" date="2008" name="Science">
        <title>The Physcomitrella genome reveals evolutionary insights into the conquest of land by plants.</title>
        <authorList>
            <person name="Rensing S.A."/>
            <person name="Lang D."/>
            <person name="Zimmer A.D."/>
            <person name="Terry A."/>
            <person name="Salamov A."/>
            <person name="Shapiro H."/>
            <person name="Nishiyama T."/>
            <person name="Perroud P.-F."/>
            <person name="Lindquist E.A."/>
            <person name="Kamisugi Y."/>
            <person name="Tanahashi T."/>
            <person name="Sakakibara K."/>
            <person name="Fujita T."/>
            <person name="Oishi K."/>
            <person name="Shin-I T."/>
            <person name="Kuroki Y."/>
            <person name="Toyoda A."/>
            <person name="Suzuki Y."/>
            <person name="Hashimoto S.-I."/>
            <person name="Yamaguchi K."/>
            <person name="Sugano S."/>
            <person name="Kohara Y."/>
            <person name="Fujiyama A."/>
            <person name="Anterola A."/>
            <person name="Aoki S."/>
            <person name="Ashton N."/>
            <person name="Barbazuk W.B."/>
            <person name="Barker E."/>
            <person name="Bennetzen J.L."/>
            <person name="Blankenship R."/>
            <person name="Cho S.H."/>
            <person name="Dutcher S.K."/>
            <person name="Estelle M."/>
            <person name="Fawcett J.A."/>
            <person name="Gundlach H."/>
            <person name="Hanada K."/>
            <person name="Heyl A."/>
            <person name="Hicks K.A."/>
            <person name="Hughes J."/>
            <person name="Lohr M."/>
            <person name="Mayer K."/>
            <person name="Melkozernov A."/>
            <person name="Murata T."/>
            <person name="Nelson D.R."/>
            <person name="Pils B."/>
            <person name="Prigge M."/>
            <person name="Reiss B."/>
            <person name="Renner T."/>
            <person name="Rombauts S."/>
            <person name="Rushton P.J."/>
            <person name="Sanderfoot A."/>
            <person name="Schween G."/>
            <person name="Shiu S.-H."/>
            <person name="Stueber K."/>
            <person name="Theodoulou F.L."/>
            <person name="Tu H."/>
            <person name="Van de Peer Y."/>
            <person name="Verrier P.J."/>
            <person name="Waters E."/>
            <person name="Wood A."/>
            <person name="Yang L."/>
            <person name="Cove D."/>
            <person name="Cuming A.C."/>
            <person name="Hasebe M."/>
            <person name="Lucas S."/>
            <person name="Mishler B.D."/>
            <person name="Reski R."/>
            <person name="Grigoriev I.V."/>
            <person name="Quatrano R.S."/>
            <person name="Boore J.L."/>
        </authorList>
    </citation>
    <scope>NUCLEOTIDE SEQUENCE [LARGE SCALE GENOMIC DNA]</scope>
    <source>
        <strain>cv. Gransden 2004</strain>
    </source>
</reference>
<feature type="initiator methionine" description="Removed" evidence="1">
    <location>
        <position position="1"/>
    </location>
</feature>
<feature type="chain" id="PRO_0000070527" description="Photosystem II reaction center protein H">
    <location>
        <begin position="2"/>
        <end position="74"/>
    </location>
</feature>
<feature type="transmembrane region" description="Helical" evidence="2">
    <location>
        <begin position="41"/>
        <end position="61"/>
    </location>
</feature>
<feature type="modified residue" description="Phosphothreonine" evidence="2">
    <location>
        <position position="3"/>
    </location>
</feature>
<gene>
    <name evidence="2" type="primary">psbH</name>
    <name type="ORF">PHYPADRAFT_119144</name>
</gene>
<comment type="function">
    <text evidence="2">One of the components of the core complex of photosystem II (PSII), required for its stability and/or assembly. PSII is a light-driven water:plastoquinone oxidoreductase that uses light energy to abstract electrons from H(2)O, generating O(2) and a proton gradient subsequently used for ATP formation. It consists of a core antenna complex that captures photons, and an electron transfer chain that converts photonic excitation into a charge separation.</text>
</comment>
<comment type="subunit">
    <text evidence="2">PSII is composed of 1 copy each of membrane proteins PsbA, PsbB, PsbC, PsbD, PsbE, PsbF, PsbH, PsbI, PsbJ, PsbK, PsbL, PsbM, PsbT, PsbX, PsbY, PsbZ, Psb30/Ycf12, at least 3 peripheral proteins of the oxygen-evolving complex and a large number of cofactors. It forms dimeric complexes.</text>
</comment>
<comment type="subcellular location">
    <subcellularLocation>
        <location evidence="2">Plastid</location>
        <location evidence="2">Chloroplast thylakoid membrane</location>
        <topology evidence="2">Single-pass membrane protein</topology>
    </subcellularLocation>
</comment>
<comment type="PTM">
    <text evidence="2">Phosphorylation is a light-dependent reaction catalyzed by a membrane-bound kinase; phosphorylation occurs on Thr residue(s) in the N-terminus of the protein.</text>
</comment>
<comment type="similarity">
    <text evidence="2">Belongs to the PsbH family.</text>
</comment>
<geneLocation type="chloroplast"/>
<protein>
    <recommendedName>
        <fullName evidence="2">Photosystem II reaction center protein H</fullName>
        <shortName evidence="2">PSII-H</shortName>
    </recommendedName>
    <alternativeName>
        <fullName evidence="2">Photosystem II 10 kDa phosphoprotein</fullName>
    </alternativeName>
</protein>